<feature type="chain" id="PRO_0000277043" description="Small ribosomal subunit protein uS7cz/uS7cy">
    <location>
        <begin position="1"/>
        <end position="155"/>
    </location>
</feature>
<reference key="1">
    <citation type="journal article" date="2007" name="Mol. Biol. Evol.">
        <title>Gene relocations within chloroplast genomes of Jasminum and Menodora (Oleaceae) are due to multiple, overlapping inversions.</title>
        <authorList>
            <person name="Lee H.-L."/>
            <person name="Jansen R.K."/>
            <person name="Chumley T.W."/>
            <person name="Kim K.-J."/>
        </authorList>
    </citation>
    <scope>NUCLEOTIDE SEQUENCE [LARGE SCALE GENOMIC DNA]</scope>
</reference>
<geneLocation type="chloroplast"/>
<comment type="function">
    <text evidence="1">One of the primary rRNA binding proteins, it binds directly to 16S rRNA where it nucleates assembly of the head domain of the 30S subunit.</text>
</comment>
<comment type="subunit">
    <text>Part of the 30S ribosomal subunit.</text>
</comment>
<comment type="subcellular location">
    <subcellularLocation>
        <location>Plastid</location>
        <location>Chloroplast</location>
    </subcellularLocation>
</comment>
<comment type="similarity">
    <text evidence="3">Belongs to the universal ribosomal protein uS7 family.</text>
</comment>
<sequence>MSRRGTAEEKTAKSDPFYRNRLVNMLINRILKHGKKSLAYQLLYRTLKEVQKKTERNPLSILREAIRRVTPDIAVKARRKGGSTRQVPIEIGSTQGKALAIRWLLAASRKRPGGNMAFKFSSELVDASKGKGGAIRKKEETHKMAEANRTFAHFR</sequence>
<evidence type="ECO:0000250" key="1"/>
<evidence type="ECO:0000255" key="2">
    <source>
        <dbReference type="HAMAP-Rule" id="MF_00480"/>
    </source>
</evidence>
<evidence type="ECO:0000305" key="3"/>
<name>RR7_JASNU</name>
<keyword id="KW-0150">Chloroplast</keyword>
<keyword id="KW-0934">Plastid</keyword>
<keyword id="KW-0687">Ribonucleoprotein</keyword>
<keyword id="KW-0689">Ribosomal protein</keyword>
<keyword id="KW-0694">RNA-binding</keyword>
<keyword id="KW-0699">rRNA-binding</keyword>
<gene>
    <name type="primary">rps7-A</name>
    <name type="ORF">JNC1049</name>
</gene>
<gene>
    <name type="primary">rps7-B</name>
    <name type="ORF">JNC1525</name>
</gene>
<accession>Q06R71</accession>
<organism>
    <name type="scientific">Jasminum nudiflorum</name>
    <name type="common">Winter jasmine</name>
    <dbReference type="NCBI Taxonomy" id="126431"/>
    <lineage>
        <taxon>Eukaryota</taxon>
        <taxon>Viridiplantae</taxon>
        <taxon>Streptophyta</taxon>
        <taxon>Embryophyta</taxon>
        <taxon>Tracheophyta</taxon>
        <taxon>Spermatophyta</taxon>
        <taxon>Magnoliopsida</taxon>
        <taxon>eudicotyledons</taxon>
        <taxon>Gunneridae</taxon>
        <taxon>Pentapetalae</taxon>
        <taxon>asterids</taxon>
        <taxon>lamiids</taxon>
        <taxon>Lamiales</taxon>
        <taxon>Oleaceae</taxon>
        <taxon>Jasmineae</taxon>
        <taxon>Jasminum</taxon>
    </lineage>
</organism>
<proteinExistence type="inferred from homology"/>
<dbReference type="EMBL" id="DQ673255">
    <property type="protein sequence ID" value="ABG74689.1"/>
    <property type="molecule type" value="Genomic_DNA"/>
</dbReference>
<dbReference type="EMBL" id="DQ673255">
    <property type="protein sequence ID" value="ABG74673.1"/>
    <property type="molecule type" value="Genomic_DNA"/>
</dbReference>
<dbReference type="SMR" id="Q06R71"/>
<dbReference type="GO" id="GO:0009507">
    <property type="term" value="C:chloroplast"/>
    <property type="evidence" value="ECO:0007669"/>
    <property type="project" value="UniProtKB-SubCell"/>
</dbReference>
<dbReference type="GO" id="GO:0015935">
    <property type="term" value="C:small ribosomal subunit"/>
    <property type="evidence" value="ECO:0007669"/>
    <property type="project" value="InterPro"/>
</dbReference>
<dbReference type="GO" id="GO:0019843">
    <property type="term" value="F:rRNA binding"/>
    <property type="evidence" value="ECO:0007669"/>
    <property type="project" value="UniProtKB-UniRule"/>
</dbReference>
<dbReference type="GO" id="GO:0003735">
    <property type="term" value="F:structural constituent of ribosome"/>
    <property type="evidence" value="ECO:0007669"/>
    <property type="project" value="InterPro"/>
</dbReference>
<dbReference type="GO" id="GO:0006412">
    <property type="term" value="P:translation"/>
    <property type="evidence" value="ECO:0007669"/>
    <property type="project" value="UniProtKB-UniRule"/>
</dbReference>
<dbReference type="CDD" id="cd14871">
    <property type="entry name" value="uS7_Chloroplast"/>
    <property type="match status" value="1"/>
</dbReference>
<dbReference type="FunFam" id="1.10.455.10:FF:000001">
    <property type="entry name" value="30S ribosomal protein S7"/>
    <property type="match status" value="1"/>
</dbReference>
<dbReference type="Gene3D" id="1.10.455.10">
    <property type="entry name" value="Ribosomal protein S7 domain"/>
    <property type="match status" value="1"/>
</dbReference>
<dbReference type="HAMAP" id="MF_00480_B">
    <property type="entry name" value="Ribosomal_uS7_B"/>
    <property type="match status" value="1"/>
</dbReference>
<dbReference type="InterPro" id="IPR000235">
    <property type="entry name" value="Ribosomal_uS7"/>
</dbReference>
<dbReference type="InterPro" id="IPR005717">
    <property type="entry name" value="Ribosomal_uS7_bac/org-type"/>
</dbReference>
<dbReference type="InterPro" id="IPR020606">
    <property type="entry name" value="Ribosomal_uS7_CS"/>
</dbReference>
<dbReference type="InterPro" id="IPR023798">
    <property type="entry name" value="Ribosomal_uS7_dom"/>
</dbReference>
<dbReference type="InterPro" id="IPR036823">
    <property type="entry name" value="Ribosomal_uS7_dom_sf"/>
</dbReference>
<dbReference type="NCBIfam" id="TIGR01029">
    <property type="entry name" value="rpsG_bact"/>
    <property type="match status" value="1"/>
</dbReference>
<dbReference type="PANTHER" id="PTHR11205">
    <property type="entry name" value="RIBOSOMAL PROTEIN S7"/>
    <property type="match status" value="1"/>
</dbReference>
<dbReference type="Pfam" id="PF00177">
    <property type="entry name" value="Ribosomal_S7"/>
    <property type="match status" value="1"/>
</dbReference>
<dbReference type="PIRSF" id="PIRSF002122">
    <property type="entry name" value="RPS7p_RPS7a_RPS5e_RPS7o"/>
    <property type="match status" value="1"/>
</dbReference>
<dbReference type="SUPFAM" id="SSF47973">
    <property type="entry name" value="Ribosomal protein S7"/>
    <property type="match status" value="1"/>
</dbReference>
<dbReference type="PROSITE" id="PS00052">
    <property type="entry name" value="RIBOSOMAL_S7"/>
    <property type="match status" value="1"/>
</dbReference>
<protein>
    <recommendedName>
        <fullName evidence="2">Small ribosomal subunit protein uS7cz/uS7cy</fullName>
    </recommendedName>
    <alternativeName>
        <fullName>30S ribosomal protein S7, chloroplastic</fullName>
    </alternativeName>
</protein>